<gene>
    <name type="primary">SSP2</name>
    <name type="ordered locus">YOR242C</name>
    <name type="ORF">O5251</name>
</gene>
<name>SSP2_YEAST</name>
<reference key="1">
    <citation type="journal article" date="2002" name="Mol. Genet. Genomics">
        <title>SSP2, a sporulation-specific gene necessary for outer spore wall assembly in the yeast Saccharomyces cerevisiae.</title>
        <authorList>
            <person name="Sarkar P.K."/>
            <person name="Florczyk M.A."/>
            <person name="McDonough K.A."/>
            <person name="Nag D.K."/>
        </authorList>
    </citation>
    <scope>NUCLEOTIDE SEQUENCE [GENOMIC DNA]</scope>
    <scope>FUNCTION</scope>
    <scope>SUBCELLULAR LOCATION</scope>
    <scope>VARIANTS SK1 HIS-62 AND GLY-88</scope>
    <source>
        <strain>SK1</strain>
    </source>
</reference>
<reference key="2">
    <citation type="journal article" date="1996" name="Yeast">
        <title>Sequence and analysis of a 26.9 kb fragment from chromosome XV of the yeast Saccharomyces cerevisiae.</title>
        <authorList>
            <person name="Boyer J."/>
            <person name="Michaux G."/>
            <person name="Fairhead C."/>
            <person name="Gaillon L."/>
            <person name="Dujon B."/>
        </authorList>
    </citation>
    <scope>NUCLEOTIDE SEQUENCE [GENOMIC DNA]</scope>
    <source>
        <strain>ATCC 96604 / S288c / FY1679</strain>
    </source>
</reference>
<reference key="3">
    <citation type="journal article" date="1997" name="Nature">
        <title>The nucleotide sequence of Saccharomyces cerevisiae chromosome XV.</title>
        <authorList>
            <person name="Dujon B."/>
            <person name="Albermann K."/>
            <person name="Aldea M."/>
            <person name="Alexandraki D."/>
            <person name="Ansorge W."/>
            <person name="Arino J."/>
            <person name="Benes V."/>
            <person name="Bohn C."/>
            <person name="Bolotin-Fukuhara M."/>
            <person name="Bordonne R."/>
            <person name="Boyer J."/>
            <person name="Camasses A."/>
            <person name="Casamayor A."/>
            <person name="Casas C."/>
            <person name="Cheret G."/>
            <person name="Cziepluch C."/>
            <person name="Daignan-Fornier B."/>
            <person name="Dang V.-D."/>
            <person name="de Haan M."/>
            <person name="Delius H."/>
            <person name="Durand P."/>
            <person name="Fairhead C."/>
            <person name="Feldmann H."/>
            <person name="Gaillon L."/>
            <person name="Galisson F."/>
            <person name="Gamo F.-J."/>
            <person name="Gancedo C."/>
            <person name="Goffeau A."/>
            <person name="Goulding S.E."/>
            <person name="Grivell L.A."/>
            <person name="Habbig B."/>
            <person name="Hand N.J."/>
            <person name="Hani J."/>
            <person name="Hattenhorst U."/>
            <person name="Hebling U."/>
            <person name="Hernando Y."/>
            <person name="Herrero E."/>
            <person name="Heumann K."/>
            <person name="Hiesel R."/>
            <person name="Hilger F."/>
            <person name="Hofmann B."/>
            <person name="Hollenberg C.P."/>
            <person name="Hughes B."/>
            <person name="Jauniaux J.-C."/>
            <person name="Kalogeropoulos A."/>
            <person name="Katsoulou C."/>
            <person name="Kordes E."/>
            <person name="Lafuente M.J."/>
            <person name="Landt O."/>
            <person name="Louis E.J."/>
            <person name="Maarse A.C."/>
            <person name="Madania A."/>
            <person name="Mannhaupt G."/>
            <person name="Marck C."/>
            <person name="Martin R.P."/>
            <person name="Mewes H.-W."/>
            <person name="Michaux G."/>
            <person name="Paces V."/>
            <person name="Parle-McDermott A.G."/>
            <person name="Pearson B.M."/>
            <person name="Perrin A."/>
            <person name="Pettersson B."/>
            <person name="Poch O."/>
            <person name="Pohl T.M."/>
            <person name="Poirey R."/>
            <person name="Portetelle D."/>
            <person name="Pujol A."/>
            <person name="Purnelle B."/>
            <person name="Ramezani Rad M."/>
            <person name="Rechmann S."/>
            <person name="Schwager C."/>
            <person name="Schweizer M."/>
            <person name="Sor F."/>
            <person name="Sterky F."/>
            <person name="Tarassov I.A."/>
            <person name="Teodoru C."/>
            <person name="Tettelin H."/>
            <person name="Thierry A."/>
            <person name="Tobiasch E."/>
            <person name="Tzermia M."/>
            <person name="Uhlen M."/>
            <person name="Unseld M."/>
            <person name="Valens M."/>
            <person name="Vandenbol M."/>
            <person name="Vetter I."/>
            <person name="Vlcek C."/>
            <person name="Voet M."/>
            <person name="Volckaert G."/>
            <person name="Voss H."/>
            <person name="Wambutt R."/>
            <person name="Wedler H."/>
            <person name="Wiemann S."/>
            <person name="Winsor B."/>
            <person name="Wolfe K.H."/>
            <person name="Zollner A."/>
            <person name="Zumstein E."/>
            <person name="Kleine K."/>
        </authorList>
    </citation>
    <scope>NUCLEOTIDE SEQUENCE [LARGE SCALE GENOMIC DNA]</scope>
    <source>
        <strain>ATCC 204508 / S288c</strain>
    </source>
</reference>
<reference key="4">
    <citation type="journal article" date="2014" name="G3 (Bethesda)">
        <title>The reference genome sequence of Saccharomyces cerevisiae: Then and now.</title>
        <authorList>
            <person name="Engel S.R."/>
            <person name="Dietrich F.S."/>
            <person name="Fisk D.G."/>
            <person name="Binkley G."/>
            <person name="Balakrishnan R."/>
            <person name="Costanzo M.C."/>
            <person name="Dwight S.S."/>
            <person name="Hitz B.C."/>
            <person name="Karra K."/>
            <person name="Nash R.S."/>
            <person name="Weng S."/>
            <person name="Wong E.D."/>
            <person name="Lloyd P."/>
            <person name="Skrzypek M.S."/>
            <person name="Miyasato S.R."/>
            <person name="Simison M."/>
            <person name="Cherry J.M."/>
        </authorList>
    </citation>
    <scope>GENOME REANNOTATION</scope>
    <source>
        <strain>ATCC 204508 / S288c</strain>
    </source>
</reference>
<reference key="5">
    <citation type="journal article" date="2003" name="Nature">
        <title>Global analysis of protein expression in yeast.</title>
        <authorList>
            <person name="Ghaemmaghami S."/>
            <person name="Huh W.-K."/>
            <person name="Bower K."/>
            <person name="Howson R.W."/>
            <person name="Belle A."/>
            <person name="Dephoure N."/>
            <person name="O'Shea E.K."/>
            <person name="Weissman J.S."/>
        </authorList>
    </citation>
    <scope>LEVEL OF PROTEIN EXPRESSION [LARGE SCALE ANALYSIS]</scope>
</reference>
<dbReference type="EMBL" id="AF418016">
    <property type="protein sequence ID" value="AAL13305.1"/>
    <property type="molecule type" value="Genomic_DNA"/>
</dbReference>
<dbReference type="EMBL" id="Z75150">
    <property type="protein sequence ID" value="CAA99463.1"/>
    <property type="molecule type" value="Genomic_DNA"/>
</dbReference>
<dbReference type="EMBL" id="BK006948">
    <property type="protein sequence ID" value="DAA11010.1"/>
    <property type="molecule type" value="Genomic_DNA"/>
</dbReference>
<dbReference type="PIR" id="S67135">
    <property type="entry name" value="S67135"/>
</dbReference>
<dbReference type="RefSeq" id="NP_014885.3">
    <property type="nucleotide sequence ID" value="NM_001183661.3"/>
</dbReference>
<dbReference type="BioGRID" id="34633">
    <property type="interactions" value="188"/>
</dbReference>
<dbReference type="DIP" id="DIP-4116N"/>
<dbReference type="FunCoup" id="Q08646">
    <property type="interactions" value="58"/>
</dbReference>
<dbReference type="MINT" id="Q08646"/>
<dbReference type="STRING" id="4932.YOR242C"/>
<dbReference type="iPTMnet" id="Q08646"/>
<dbReference type="PaxDb" id="4932-YOR242C"/>
<dbReference type="EnsemblFungi" id="YOR242C_mRNA">
    <property type="protein sequence ID" value="YOR242C"/>
    <property type="gene ID" value="YOR242C"/>
</dbReference>
<dbReference type="GeneID" id="854416"/>
<dbReference type="KEGG" id="sce:YOR242C"/>
<dbReference type="AGR" id="SGD:S000005768"/>
<dbReference type="SGD" id="S000005768">
    <property type="gene designation" value="SSP2"/>
</dbReference>
<dbReference type="VEuPathDB" id="FungiDB:YOR242C"/>
<dbReference type="eggNOG" id="ENOG502RYS8">
    <property type="taxonomic scope" value="Eukaryota"/>
</dbReference>
<dbReference type="HOGENOM" id="CLU_046455_0_0_1"/>
<dbReference type="InParanoid" id="Q08646"/>
<dbReference type="OMA" id="FYENGEY"/>
<dbReference type="OrthoDB" id="4073963at2759"/>
<dbReference type="BioCyc" id="YEAST:G3O-33736-MONOMER"/>
<dbReference type="BioGRID-ORCS" id="854416">
    <property type="hits" value="1 hit in 10 CRISPR screens"/>
</dbReference>
<dbReference type="PRO" id="PR:Q08646"/>
<dbReference type="Proteomes" id="UP000002311">
    <property type="component" value="Chromosome XV"/>
</dbReference>
<dbReference type="RNAct" id="Q08646">
    <property type="molecule type" value="protein"/>
</dbReference>
<dbReference type="GO" id="GO:0005619">
    <property type="term" value="C:ascospore wall"/>
    <property type="evidence" value="ECO:0000314"/>
    <property type="project" value="SGD"/>
</dbReference>
<dbReference type="GO" id="GO:0005634">
    <property type="term" value="C:nucleus"/>
    <property type="evidence" value="ECO:0007005"/>
    <property type="project" value="SGD"/>
</dbReference>
<dbReference type="GO" id="GO:0005628">
    <property type="term" value="C:prospore membrane"/>
    <property type="evidence" value="ECO:0007005"/>
    <property type="project" value="SGD"/>
</dbReference>
<dbReference type="GO" id="GO:0003676">
    <property type="term" value="F:nucleic acid binding"/>
    <property type="evidence" value="ECO:0007669"/>
    <property type="project" value="InterPro"/>
</dbReference>
<dbReference type="GO" id="GO:0030295">
    <property type="term" value="F:protein kinase activator activity"/>
    <property type="evidence" value="ECO:0000314"/>
    <property type="project" value="SGD"/>
</dbReference>
<dbReference type="GO" id="GO:0030437">
    <property type="term" value="P:ascospore formation"/>
    <property type="evidence" value="ECO:0000315"/>
    <property type="project" value="SGD"/>
</dbReference>
<dbReference type="GO" id="GO:0030476">
    <property type="term" value="P:ascospore wall assembly"/>
    <property type="evidence" value="ECO:0000315"/>
    <property type="project" value="SGD"/>
</dbReference>
<dbReference type="CDD" id="cd12419">
    <property type="entry name" value="RRM_Ssp2_like"/>
    <property type="match status" value="1"/>
</dbReference>
<dbReference type="Gene3D" id="3.30.70.330">
    <property type="match status" value="1"/>
</dbReference>
<dbReference type="InterPro" id="IPR012677">
    <property type="entry name" value="Nucleotide-bd_a/b_plait_sf"/>
</dbReference>
<dbReference type="InterPro" id="IPR035979">
    <property type="entry name" value="RBD_domain_sf"/>
</dbReference>
<dbReference type="SUPFAM" id="SSF54928">
    <property type="entry name" value="RNA-binding domain, RBD"/>
    <property type="match status" value="1"/>
</dbReference>
<sequence>MYKNYYSNTEVYKKHKDSGSLRKKALRSRRSSFFSFFNDSSSSNGNEFIGFRRFAKAYLFGREIGSCGTDSYTPVGANVNKRRLKKEDKNDQQLWKRQHHSQGCFFPIDDDSNKQTEAAVNKFYENGEYVNQDLIFKGKVYSEESEVVDEKTAGSQNPALLKTRSISLNDIPRGTGISSVLSQVRGGSLERIIVYRYDTPERSLHKVDLFFLNYEGAQSFMRYAKTNIFKVNGVQLKPEWIFLESTYENIMKEQSVNRIIEEEKFISRCLIVKKSSTTAMPNKSNLNKGQTLENIDIQELEKDFQNFGEVLEITPIVSRKLCVSIFFYDISSAMRAMEEYEQKGSYLYNKYFKTWTIWYGKDITDQPCIDL</sequence>
<keyword id="KW-1185">Reference proteome</keyword>
<keyword id="KW-0749">Sporulation</keyword>
<accession>Q08646</accession>
<accession>D6W2U4</accession>
<accession>Q96US5</accession>
<feature type="chain" id="PRO_0000072217" description="Sporulation-specific protein 2">
    <location>
        <begin position="1"/>
        <end position="371"/>
    </location>
</feature>
<feature type="sequence variant" description="In strain: SK1." evidence="1">
    <original>R</original>
    <variation>H</variation>
    <location>
        <position position="62"/>
    </location>
</feature>
<feature type="sequence variant" description="In strain: SK1." evidence="1">
    <original>D</original>
    <variation>G</variation>
    <location>
        <position position="88"/>
    </location>
</feature>
<evidence type="ECO:0000269" key="1">
    <source>
    </source>
</evidence>
<evidence type="ECO:0000269" key="2">
    <source>
    </source>
</evidence>
<proteinExistence type="evidence at protein level"/>
<protein>
    <recommendedName>
        <fullName>Sporulation-specific protein 2</fullName>
    </recommendedName>
</protein>
<organism>
    <name type="scientific">Saccharomyces cerevisiae (strain ATCC 204508 / S288c)</name>
    <name type="common">Baker's yeast</name>
    <dbReference type="NCBI Taxonomy" id="559292"/>
    <lineage>
        <taxon>Eukaryota</taxon>
        <taxon>Fungi</taxon>
        <taxon>Dikarya</taxon>
        <taxon>Ascomycota</taxon>
        <taxon>Saccharomycotina</taxon>
        <taxon>Saccharomycetes</taxon>
        <taxon>Saccharomycetales</taxon>
        <taxon>Saccharomycetaceae</taxon>
        <taxon>Saccharomyces</taxon>
    </lineage>
</organism>
<comment type="function">
    <text evidence="1">Essential for sporulation and seems to have a role at the time of, or after, initiation of nuclear division. Appears to have a role in outer spore wall formation.</text>
</comment>
<comment type="subcellular location">
    <subcellularLocation>
        <location evidence="1">Spore wall</location>
    </subcellularLocation>
</comment>
<comment type="miscellaneous">
    <text evidence="2">Present with 3000 molecules/cell in log phase SD medium.</text>
</comment>